<evidence type="ECO:0000255" key="1">
    <source>
        <dbReference type="HAMAP-Rule" id="MF_00041"/>
    </source>
</evidence>
<accession>A9NEI9</accession>
<reference key="1">
    <citation type="journal article" date="2011" name="J. Bacteriol.">
        <title>Complete genome and proteome of Acholeplasma laidlawii.</title>
        <authorList>
            <person name="Lazarev V.N."/>
            <person name="Levitskii S.A."/>
            <person name="Basovskii Y.I."/>
            <person name="Chukin M.M."/>
            <person name="Akopian T.A."/>
            <person name="Vereshchagin V.V."/>
            <person name="Kostrjukova E.S."/>
            <person name="Kovaleva G.Y."/>
            <person name="Kazanov M.D."/>
            <person name="Malko D.B."/>
            <person name="Vitreschak A.G."/>
            <person name="Sernova N.V."/>
            <person name="Gelfand M.S."/>
            <person name="Demina I.A."/>
            <person name="Serebryakova M.V."/>
            <person name="Galyamina M.A."/>
            <person name="Vtyurin N.N."/>
            <person name="Rogov S.I."/>
            <person name="Alexeev D.G."/>
            <person name="Ladygina V.G."/>
            <person name="Govorun V.M."/>
        </authorList>
    </citation>
    <scope>NUCLEOTIDE SEQUENCE [LARGE SCALE GENOMIC DNA]</scope>
    <source>
        <strain>PG-8A</strain>
    </source>
</reference>
<keyword id="KW-0030">Aminoacyl-tRNA synthetase</keyword>
<keyword id="KW-0067">ATP-binding</keyword>
<keyword id="KW-0963">Cytoplasm</keyword>
<keyword id="KW-0436">Ligase</keyword>
<keyword id="KW-0479">Metal-binding</keyword>
<keyword id="KW-0547">Nucleotide-binding</keyword>
<keyword id="KW-0648">Protein biosynthesis</keyword>
<keyword id="KW-1185">Reference proteome</keyword>
<keyword id="KW-0862">Zinc</keyword>
<protein>
    <recommendedName>
        <fullName evidence="1">Cysteine--tRNA ligase</fullName>
        <ecNumber evidence="1">6.1.1.16</ecNumber>
    </recommendedName>
    <alternativeName>
        <fullName evidence="1">Cysteinyl-tRNA synthetase</fullName>
        <shortName evidence="1">CysRS</shortName>
    </alternativeName>
</protein>
<dbReference type="EC" id="6.1.1.16" evidence="1"/>
<dbReference type="EMBL" id="CP000896">
    <property type="protein sequence ID" value="ABX80769.1"/>
    <property type="molecule type" value="Genomic_DNA"/>
</dbReference>
<dbReference type="RefSeq" id="WP_012242100.1">
    <property type="nucleotide sequence ID" value="NC_010163.1"/>
</dbReference>
<dbReference type="SMR" id="A9NEI9"/>
<dbReference type="STRING" id="441768.ACL_0143"/>
<dbReference type="GeneID" id="41338341"/>
<dbReference type="KEGG" id="acl:ACL_0143"/>
<dbReference type="eggNOG" id="COG0215">
    <property type="taxonomic scope" value="Bacteria"/>
</dbReference>
<dbReference type="HOGENOM" id="CLU_013528_0_1_14"/>
<dbReference type="OrthoDB" id="9815130at2"/>
<dbReference type="Proteomes" id="UP000008558">
    <property type="component" value="Chromosome"/>
</dbReference>
<dbReference type="GO" id="GO:0005829">
    <property type="term" value="C:cytosol"/>
    <property type="evidence" value="ECO:0007669"/>
    <property type="project" value="TreeGrafter"/>
</dbReference>
<dbReference type="GO" id="GO:0005524">
    <property type="term" value="F:ATP binding"/>
    <property type="evidence" value="ECO:0007669"/>
    <property type="project" value="UniProtKB-UniRule"/>
</dbReference>
<dbReference type="GO" id="GO:0004817">
    <property type="term" value="F:cysteine-tRNA ligase activity"/>
    <property type="evidence" value="ECO:0007669"/>
    <property type="project" value="UniProtKB-UniRule"/>
</dbReference>
<dbReference type="GO" id="GO:0008270">
    <property type="term" value="F:zinc ion binding"/>
    <property type="evidence" value="ECO:0007669"/>
    <property type="project" value="UniProtKB-UniRule"/>
</dbReference>
<dbReference type="GO" id="GO:0006423">
    <property type="term" value="P:cysteinyl-tRNA aminoacylation"/>
    <property type="evidence" value="ECO:0007669"/>
    <property type="project" value="UniProtKB-UniRule"/>
</dbReference>
<dbReference type="CDD" id="cd00672">
    <property type="entry name" value="CysRS_core"/>
    <property type="match status" value="1"/>
</dbReference>
<dbReference type="Gene3D" id="1.20.120.1910">
    <property type="entry name" value="Cysteine-tRNA ligase, C-terminal anti-codon recognition domain"/>
    <property type="match status" value="1"/>
</dbReference>
<dbReference type="Gene3D" id="3.40.50.620">
    <property type="entry name" value="HUPs"/>
    <property type="match status" value="1"/>
</dbReference>
<dbReference type="HAMAP" id="MF_00041">
    <property type="entry name" value="Cys_tRNA_synth"/>
    <property type="match status" value="1"/>
</dbReference>
<dbReference type="InterPro" id="IPR015803">
    <property type="entry name" value="Cys-tRNA-ligase"/>
</dbReference>
<dbReference type="InterPro" id="IPR024909">
    <property type="entry name" value="Cys-tRNA/MSH_ligase"/>
</dbReference>
<dbReference type="InterPro" id="IPR014729">
    <property type="entry name" value="Rossmann-like_a/b/a_fold"/>
</dbReference>
<dbReference type="InterPro" id="IPR032678">
    <property type="entry name" value="tRNA-synt_1_cat_dom"/>
</dbReference>
<dbReference type="InterPro" id="IPR009080">
    <property type="entry name" value="tRNAsynth_Ia_anticodon-bd"/>
</dbReference>
<dbReference type="NCBIfam" id="TIGR00435">
    <property type="entry name" value="cysS"/>
    <property type="match status" value="1"/>
</dbReference>
<dbReference type="PANTHER" id="PTHR10890:SF3">
    <property type="entry name" value="CYSTEINE--TRNA LIGASE, CYTOPLASMIC"/>
    <property type="match status" value="1"/>
</dbReference>
<dbReference type="PANTHER" id="PTHR10890">
    <property type="entry name" value="CYSTEINYL-TRNA SYNTHETASE"/>
    <property type="match status" value="1"/>
</dbReference>
<dbReference type="Pfam" id="PF01406">
    <property type="entry name" value="tRNA-synt_1e"/>
    <property type="match status" value="1"/>
</dbReference>
<dbReference type="PRINTS" id="PR00983">
    <property type="entry name" value="TRNASYNTHCYS"/>
</dbReference>
<dbReference type="SUPFAM" id="SSF47323">
    <property type="entry name" value="Anticodon-binding domain of a subclass of class I aminoacyl-tRNA synthetases"/>
    <property type="match status" value="1"/>
</dbReference>
<dbReference type="SUPFAM" id="SSF52374">
    <property type="entry name" value="Nucleotidylyl transferase"/>
    <property type="match status" value="1"/>
</dbReference>
<comment type="catalytic activity">
    <reaction evidence="1">
        <text>tRNA(Cys) + L-cysteine + ATP = L-cysteinyl-tRNA(Cys) + AMP + diphosphate</text>
        <dbReference type="Rhea" id="RHEA:17773"/>
        <dbReference type="Rhea" id="RHEA-COMP:9661"/>
        <dbReference type="Rhea" id="RHEA-COMP:9679"/>
        <dbReference type="ChEBI" id="CHEBI:30616"/>
        <dbReference type="ChEBI" id="CHEBI:33019"/>
        <dbReference type="ChEBI" id="CHEBI:35235"/>
        <dbReference type="ChEBI" id="CHEBI:78442"/>
        <dbReference type="ChEBI" id="CHEBI:78517"/>
        <dbReference type="ChEBI" id="CHEBI:456215"/>
        <dbReference type="EC" id="6.1.1.16"/>
    </reaction>
</comment>
<comment type="cofactor">
    <cofactor evidence="1">
        <name>Zn(2+)</name>
        <dbReference type="ChEBI" id="CHEBI:29105"/>
    </cofactor>
    <text evidence="1">Binds 1 zinc ion per subunit.</text>
</comment>
<comment type="subunit">
    <text evidence="1">Monomer.</text>
</comment>
<comment type="subcellular location">
    <subcellularLocation>
        <location evidence="1">Cytoplasm</location>
    </subcellularLocation>
</comment>
<comment type="similarity">
    <text evidence="1">Belongs to the class-I aminoacyl-tRNA synthetase family.</text>
</comment>
<gene>
    <name evidence="1" type="primary">cysS</name>
    <name type="ordered locus">ACL_0143</name>
</gene>
<sequence>MLKIYNSLSNKIEEFKPIHEKKVNMYVCGPTVYDDIHIGNGRPVVFFDVVKRYLQYLDYGVKYASNITDVDDKIIDRAQKLHITEKELATTYTNNFFEIAKKIGGYNFDVTPHATNYIEEMIKFIGELISDGFAYKTQSGVYFRVDKIKDYGILSNQQVKDLKTGVRIDLETDKEKDYDFALWKNTEEGIKYHAPWGDGRPGWHTECVVMTNEIFGGEIDIHGGGFDLKFPHHENEIAQSVAKHDHHLAKYWMHVGRLDLANEKMSKSLGNDIKLKDLVQVYNPNAYRLMLLAHHYRAPIQFSDDLIEQYQKAYDKISYTLNKWHFHMILNNINENGLDHESMEYFEGFMNDDFATPRVISLIDKLIKDLNKAFKVENYNTIIQILSTLGINPNILEVLEDDIQNYNNWQQARLEKNYEKADIYRKPLLDKGFI</sequence>
<name>SYC_ACHLI</name>
<proteinExistence type="inferred from homology"/>
<feature type="chain" id="PRO_0000332776" description="Cysteine--tRNA ligase">
    <location>
        <begin position="1"/>
        <end position="434"/>
    </location>
</feature>
<feature type="short sequence motif" description="'HIGH' region">
    <location>
        <begin position="30"/>
        <end position="40"/>
    </location>
</feature>
<feature type="short sequence motif" description="'KMSKS' region">
    <location>
        <begin position="264"/>
        <end position="268"/>
    </location>
</feature>
<feature type="binding site" evidence="1">
    <location>
        <position position="28"/>
    </location>
    <ligand>
        <name>Zn(2+)</name>
        <dbReference type="ChEBI" id="CHEBI:29105"/>
    </ligand>
</feature>
<feature type="binding site" evidence="1">
    <location>
        <position position="207"/>
    </location>
    <ligand>
        <name>Zn(2+)</name>
        <dbReference type="ChEBI" id="CHEBI:29105"/>
    </ligand>
</feature>
<feature type="binding site" evidence="1">
    <location>
        <position position="232"/>
    </location>
    <ligand>
        <name>Zn(2+)</name>
        <dbReference type="ChEBI" id="CHEBI:29105"/>
    </ligand>
</feature>
<feature type="binding site" evidence="1">
    <location>
        <position position="236"/>
    </location>
    <ligand>
        <name>Zn(2+)</name>
        <dbReference type="ChEBI" id="CHEBI:29105"/>
    </ligand>
</feature>
<feature type="binding site" evidence="1">
    <location>
        <position position="267"/>
    </location>
    <ligand>
        <name>ATP</name>
        <dbReference type="ChEBI" id="CHEBI:30616"/>
    </ligand>
</feature>
<organism>
    <name type="scientific">Acholeplasma laidlawii (strain PG-8A)</name>
    <dbReference type="NCBI Taxonomy" id="441768"/>
    <lineage>
        <taxon>Bacteria</taxon>
        <taxon>Bacillati</taxon>
        <taxon>Mycoplasmatota</taxon>
        <taxon>Mollicutes</taxon>
        <taxon>Acholeplasmatales</taxon>
        <taxon>Acholeplasmataceae</taxon>
        <taxon>Acholeplasma</taxon>
    </lineage>
</organism>